<evidence type="ECO:0000250" key="1"/>
<evidence type="ECO:0000255" key="2">
    <source>
        <dbReference type="PROSITE-ProRule" id="PRU00258"/>
    </source>
</evidence>
<evidence type="ECO:0000305" key="3"/>
<protein>
    <recommendedName>
        <fullName>Phenyloxazoline synthase MbtB</fullName>
        <ecNumber>6.3.2.-</ecNumber>
    </recommendedName>
    <alternativeName>
        <fullName>Mycobactin synthetase protein B</fullName>
    </alternativeName>
</protein>
<feature type="chain" id="PRO_0000261305" description="Phenyloxazoline synthase MbtB">
    <location>
        <begin position="1"/>
        <end position="1414"/>
    </location>
</feature>
<feature type="domain" description="Carrier 1" evidence="2">
    <location>
        <begin position="5"/>
        <end position="78"/>
    </location>
</feature>
<feature type="domain" description="Carrier 2" evidence="2">
    <location>
        <begin position="1057"/>
        <end position="1135"/>
    </location>
</feature>
<feature type="region of interest" description="Condensation/cyclization">
    <location>
        <begin position="96"/>
        <end position="394"/>
    </location>
</feature>
<feature type="region of interest" description="Adenylation">
    <location>
        <begin position="579"/>
        <end position="975"/>
    </location>
</feature>
<feature type="region of interest" description="Thioesterase">
    <location>
        <begin position="1188"/>
        <end position="1413"/>
    </location>
</feature>
<feature type="modified residue" description="O-(pantetheine 4'-phosphoryl)serine" evidence="2">
    <location>
        <position position="39"/>
    </location>
</feature>
<feature type="modified residue" description="O-(pantetheine 4'-phosphoryl)serine" evidence="2">
    <location>
        <position position="1094"/>
    </location>
</feature>
<sequence length="1414" mass="151606">MVHATACSEIIRAEVAELLGVRADALHPGANLVGQGLDSIRMMSLVGRWRRKGIAVDFATLAATPTIEAWSQLVSAGTGVAPTAVAAPGDAGLSQEGEPFPLAPMQHAMWVGRHDHQQLGGVAGHLYVEFDGARVDPDRLRAAATRLALRHPMLRVQFLPDGTQRIPPAAGSRDFPISVADLRHVAPDVVDQRLAGIRDAKSHQQLDGAVFELALTLLPGERTRLHVDLDMQAADAMSYRILLADLAALYDGREPPALGYTYQEYRQAIEAEETLPQPVRDADRDWWAQRIPQLPDPPALPTRAGGERDRRRSTRRWHWLDPQTRDALFARARARGITPAMTLAAAFANVLARWSASSRFLLNLPLFSRQALHPDVDLLVGDFTSSLLLDVDLTGARTAAARAQAVQEALRSAAGHSAYPGLSVLRDLSRHRGTQVLAPVVFTSALGLGDLFCPDVTEQFGTPGWIISQGPQVLLDAQVTEFDGGVLVNWDVREGVFAPGVIDAMFTHQVDELLRLAAGDDAWDAPSPSALPAAQRAVRAALNGRTAAPSTEALHDGFFRQAQQQPDAPAVFASSGDLSYAQLRDQASAVAAALRAAGLRVGDTVAVLGPKTGEQVAAVLGILAAGGVYLPIGVDQPRDRAERILATGSVNLALVCGPPCQVRVPVPTLLLADVLAAAPAEFVPGPSDPTALAYVLFTSGSTGEPKGVEVAHDAAMNTVETFIRHFELGAADRWLALATLECDMSVLDIFAALRSGGAIVVVDEAQRRDPDAWARLIDTYEVTALNFMPGWLDMLLEVGGGRLSSLRAVAVGGDWVRPDLARRLQVQAPSARFAGLGGATETAVHATIFEVQDAANLPPDWASVPYGVPFPNNACRVVADSGDDCPDWVAGELWVSGRGIARGYRGRPELTAERFVEHDGRTWYRTGDLARYWHDGTLEFVGRADHRVKISGYRVELGEIEAALQRLPGVHAAAATVLPGGSDVLAAAVCVDDAGVTAESIRQQLADLVPAHMIPRHVTLLDRIPFTDSGKIDRAEVGALLAAEVERSGDRSAPYAAPRTVLQRALRRIVADILGRANDAVGVHDDFFALGGDSVLATQVVAGIRRWLDSPSLMVADMFAARTIAALAQLLTGREANADRLELVAEVYLEIANMTSADVMAALDPIEQPAQPAFKPWVKRFTGTDKPGAVLVFPHAGGAAAAYRWLAKSLVANDVDTFVVQYPQRADRRSHPAADSIEALALELFEAGDWHLTAPLTLFGHCMGAIVAFEFARLAERNGVPVRALWASSGQAPSTVAASGPLPTADRDVLADMVDLGGTDPVLLEDEEFVELLVPAVKADYRALSGYSCPPDVRIRANIHAVGGNRDHRISREMLTSWETHTSGRFTLSHFDGGHFYLNDHLDAVARMVSADVR</sequence>
<comment type="function">
    <text evidence="1">Involved in the initial steps of the mycobactin biosynthetic pathway. Putatively couples activated salicylic acid with serine or threonine and cyclizes this precursor to the hydroxyphenyloxazoline ring system present in this class of siderophores (By similarity).</text>
</comment>
<comment type="cofactor">
    <cofactor evidence="1">
        <name>pantetheine 4'-phosphate</name>
        <dbReference type="ChEBI" id="CHEBI:47942"/>
    </cofactor>
    <text evidence="1">Binds 2 phosphopantetheines covalently.</text>
</comment>
<comment type="pathway">
    <text>Siderophore biosynthesis; mycobactin biosynthesis.</text>
</comment>
<comment type="domain">
    <text evidence="1">Modular protein that contains an aryl carrier protein (ArCP) domain which bears a phosphopantetheinyl arm to attach the activated salicylic acid, a condensation/cyclization domain involved in the formation of the oxazoline ring, an adenylation domain which activates the serine or threonine residue into an aminoacyl-AMP ester, a peptidyl carrier protein (PCP) domain which bears a phosphopantetheinyl arm to attach the activated serine or threonine, and a terminal thioesterase domain which assists in the transfer of intermediates from MbtB to ACP1 in MbtD.</text>
</comment>
<comment type="PTM">
    <text evidence="1">4'-phosphopantetheine is transferred from CoA to a specific serine in each of the two carrier protein domains, leading to their activation from apo to holo forms.</text>
</comment>
<comment type="similarity">
    <text evidence="3">Belongs to the ATP-dependent AMP-binding enzyme family. MbtB subfamily.</text>
</comment>
<reference key="1">
    <citation type="journal article" date="2003" name="Proc. Natl. Acad. Sci. U.S.A.">
        <title>The complete genome sequence of Mycobacterium bovis.</title>
        <authorList>
            <person name="Garnier T."/>
            <person name="Eiglmeier K."/>
            <person name="Camus J.-C."/>
            <person name="Medina N."/>
            <person name="Mansoor H."/>
            <person name="Pryor M."/>
            <person name="Duthoy S."/>
            <person name="Grondin S."/>
            <person name="Lacroix C."/>
            <person name="Monsempe C."/>
            <person name="Simon S."/>
            <person name="Harris B."/>
            <person name="Atkin R."/>
            <person name="Doggett J."/>
            <person name="Mayes R."/>
            <person name="Keating L."/>
            <person name="Wheeler P.R."/>
            <person name="Parkhill J."/>
            <person name="Barrell B.G."/>
            <person name="Cole S.T."/>
            <person name="Gordon S.V."/>
            <person name="Hewinson R.G."/>
        </authorList>
    </citation>
    <scope>NUCLEOTIDE SEQUENCE [LARGE SCALE GENOMIC DNA]</scope>
    <source>
        <strain>ATCC BAA-935 / AF2122/97</strain>
    </source>
</reference>
<reference key="2">
    <citation type="journal article" date="2017" name="Genome Announc.">
        <title>Updated reference genome sequence and annotation of Mycobacterium bovis AF2122/97.</title>
        <authorList>
            <person name="Malone K.M."/>
            <person name="Farrell D."/>
            <person name="Stuber T.P."/>
            <person name="Schubert O.T."/>
            <person name="Aebersold R."/>
            <person name="Robbe-Austerman S."/>
            <person name="Gordon S.V."/>
        </authorList>
    </citation>
    <scope>NUCLEOTIDE SEQUENCE [LARGE SCALE GENOMIC DNA]</scope>
    <scope>GENOME REANNOTATION</scope>
    <source>
        <strain>ATCC BAA-935 / AF2122/97</strain>
    </source>
</reference>
<organism>
    <name type="scientific">Mycobacterium bovis (strain ATCC BAA-935 / AF2122/97)</name>
    <dbReference type="NCBI Taxonomy" id="233413"/>
    <lineage>
        <taxon>Bacteria</taxon>
        <taxon>Bacillati</taxon>
        <taxon>Actinomycetota</taxon>
        <taxon>Actinomycetes</taxon>
        <taxon>Mycobacteriales</taxon>
        <taxon>Mycobacteriaceae</taxon>
        <taxon>Mycobacterium</taxon>
        <taxon>Mycobacterium tuberculosis complex</taxon>
    </lineage>
</organism>
<proteinExistence type="inferred from homology"/>
<accession>Q7TYQ4</accession>
<accession>A0A1R3Y195</accession>
<accession>X2BKB5</accession>
<keyword id="KW-0436">Ligase</keyword>
<keyword id="KW-0511">Multifunctional enzyme</keyword>
<keyword id="KW-0596">Phosphopantetheine</keyword>
<keyword id="KW-0597">Phosphoprotein</keyword>
<keyword id="KW-1185">Reference proteome</keyword>
<keyword id="KW-0677">Repeat</keyword>
<dbReference type="EC" id="6.3.2.-"/>
<dbReference type="EMBL" id="LT708304">
    <property type="protein sequence ID" value="SIU01016.1"/>
    <property type="molecule type" value="Genomic_DNA"/>
</dbReference>
<dbReference type="RefSeq" id="NP_856053.1">
    <property type="nucleotide sequence ID" value="NC_002945.3"/>
</dbReference>
<dbReference type="RefSeq" id="WP_010950705.1">
    <property type="nucleotide sequence ID" value="NC_002945.4"/>
</dbReference>
<dbReference type="SMR" id="Q7TYQ4"/>
<dbReference type="ESTHER" id="myctu-MBTB">
    <property type="family name" value="Thioesterase"/>
</dbReference>
<dbReference type="KEGG" id="mbo:BQ2027_MB2404C"/>
<dbReference type="PATRIC" id="fig|233413.5.peg.2641"/>
<dbReference type="UniPathway" id="UPA00011"/>
<dbReference type="Proteomes" id="UP000001419">
    <property type="component" value="Chromosome"/>
</dbReference>
<dbReference type="GO" id="GO:0005737">
    <property type="term" value="C:cytoplasm"/>
    <property type="evidence" value="ECO:0007669"/>
    <property type="project" value="TreeGrafter"/>
</dbReference>
<dbReference type="GO" id="GO:0000036">
    <property type="term" value="F:acyl carrier activity"/>
    <property type="evidence" value="ECO:0007669"/>
    <property type="project" value="TreeGrafter"/>
</dbReference>
<dbReference type="GO" id="GO:0016874">
    <property type="term" value="F:ligase activity"/>
    <property type="evidence" value="ECO:0007669"/>
    <property type="project" value="UniProtKB-KW"/>
</dbReference>
<dbReference type="GO" id="GO:0031177">
    <property type="term" value="F:phosphopantetheine binding"/>
    <property type="evidence" value="ECO:0007669"/>
    <property type="project" value="InterPro"/>
</dbReference>
<dbReference type="GO" id="GO:0043041">
    <property type="term" value="P:amino acid activation for nonribosomal peptide biosynthetic process"/>
    <property type="evidence" value="ECO:0007669"/>
    <property type="project" value="TreeGrafter"/>
</dbReference>
<dbReference type="GO" id="GO:0044550">
    <property type="term" value="P:secondary metabolite biosynthetic process"/>
    <property type="evidence" value="ECO:0007669"/>
    <property type="project" value="TreeGrafter"/>
</dbReference>
<dbReference type="CDD" id="cd12114">
    <property type="entry name" value="A_NRPS_TlmIV_like"/>
    <property type="match status" value="1"/>
</dbReference>
<dbReference type="CDD" id="cd19535">
    <property type="entry name" value="Cyc_NRPS"/>
    <property type="match status" value="1"/>
</dbReference>
<dbReference type="FunFam" id="1.10.1200.10:FF:000016">
    <property type="entry name" value="Non-ribosomal peptide synthase"/>
    <property type="match status" value="1"/>
</dbReference>
<dbReference type="FunFam" id="3.30.559.10:FF:000023">
    <property type="entry name" value="Non-ribosomal peptide synthetase"/>
    <property type="match status" value="1"/>
</dbReference>
<dbReference type="FunFam" id="3.40.50.12780:FF:000012">
    <property type="entry name" value="Non-ribosomal peptide synthetase"/>
    <property type="match status" value="1"/>
</dbReference>
<dbReference type="FunFam" id="3.40.50.1820:FF:000366">
    <property type="entry name" value="Phenyloxazoline synthase MbtB"/>
    <property type="match status" value="1"/>
</dbReference>
<dbReference type="FunFam" id="3.30.559.30:FF:000006">
    <property type="entry name" value="Yersiniabactin polyketide/non-ribosomal peptide synthetase"/>
    <property type="match status" value="1"/>
</dbReference>
<dbReference type="Gene3D" id="3.30.300.30">
    <property type="match status" value="1"/>
</dbReference>
<dbReference type="Gene3D" id="1.10.1200.10">
    <property type="entry name" value="ACP-like"/>
    <property type="match status" value="2"/>
</dbReference>
<dbReference type="Gene3D" id="3.40.50.1820">
    <property type="entry name" value="alpha/beta hydrolase"/>
    <property type="match status" value="1"/>
</dbReference>
<dbReference type="Gene3D" id="3.30.559.10">
    <property type="entry name" value="Chloramphenicol acetyltransferase-like domain"/>
    <property type="match status" value="1"/>
</dbReference>
<dbReference type="Gene3D" id="3.40.50.12780">
    <property type="entry name" value="N-terminal domain of ligase-like"/>
    <property type="match status" value="1"/>
</dbReference>
<dbReference type="Gene3D" id="3.30.559.30">
    <property type="entry name" value="Nonribosomal peptide synthetase, condensation domain"/>
    <property type="match status" value="1"/>
</dbReference>
<dbReference type="InterPro" id="IPR010071">
    <property type="entry name" value="AA_adenyl_dom"/>
</dbReference>
<dbReference type="InterPro" id="IPR029058">
    <property type="entry name" value="AB_hydrolase_fold"/>
</dbReference>
<dbReference type="InterPro" id="IPR036736">
    <property type="entry name" value="ACP-like_sf"/>
</dbReference>
<dbReference type="InterPro" id="IPR025110">
    <property type="entry name" value="AMP-bd_C"/>
</dbReference>
<dbReference type="InterPro" id="IPR045851">
    <property type="entry name" value="AMP-bd_C_sf"/>
</dbReference>
<dbReference type="InterPro" id="IPR020845">
    <property type="entry name" value="AMP-binding_CS"/>
</dbReference>
<dbReference type="InterPro" id="IPR000873">
    <property type="entry name" value="AMP-dep_synth/lig_dom"/>
</dbReference>
<dbReference type="InterPro" id="IPR042099">
    <property type="entry name" value="ANL_N_sf"/>
</dbReference>
<dbReference type="InterPro" id="IPR023213">
    <property type="entry name" value="CAT-like_dom_sf"/>
</dbReference>
<dbReference type="InterPro" id="IPR001242">
    <property type="entry name" value="Condensatn"/>
</dbReference>
<dbReference type="InterPro" id="IPR020806">
    <property type="entry name" value="PKS_PP-bd"/>
</dbReference>
<dbReference type="InterPro" id="IPR009081">
    <property type="entry name" value="PP-bd_ACP"/>
</dbReference>
<dbReference type="InterPro" id="IPR006162">
    <property type="entry name" value="Ppantetheine_attach_site"/>
</dbReference>
<dbReference type="InterPro" id="IPR001031">
    <property type="entry name" value="Thioesterase"/>
</dbReference>
<dbReference type="NCBIfam" id="TIGR01733">
    <property type="entry name" value="AA-adenyl-dom"/>
    <property type="match status" value="1"/>
</dbReference>
<dbReference type="PANTHER" id="PTHR45527">
    <property type="entry name" value="NONRIBOSOMAL PEPTIDE SYNTHETASE"/>
    <property type="match status" value="1"/>
</dbReference>
<dbReference type="PANTHER" id="PTHR45527:SF10">
    <property type="entry name" value="PYOCHELIN SYNTHASE PCHF"/>
    <property type="match status" value="1"/>
</dbReference>
<dbReference type="Pfam" id="PF00501">
    <property type="entry name" value="AMP-binding"/>
    <property type="match status" value="1"/>
</dbReference>
<dbReference type="Pfam" id="PF13193">
    <property type="entry name" value="AMP-binding_C"/>
    <property type="match status" value="1"/>
</dbReference>
<dbReference type="Pfam" id="PF00668">
    <property type="entry name" value="Condensation"/>
    <property type="match status" value="1"/>
</dbReference>
<dbReference type="Pfam" id="PF00550">
    <property type="entry name" value="PP-binding"/>
    <property type="match status" value="2"/>
</dbReference>
<dbReference type="Pfam" id="PF00975">
    <property type="entry name" value="Thioesterase"/>
    <property type="match status" value="1"/>
</dbReference>
<dbReference type="SMART" id="SM00823">
    <property type="entry name" value="PKS_PP"/>
    <property type="match status" value="2"/>
</dbReference>
<dbReference type="SUPFAM" id="SSF56801">
    <property type="entry name" value="Acetyl-CoA synthetase-like"/>
    <property type="match status" value="1"/>
</dbReference>
<dbReference type="SUPFAM" id="SSF47336">
    <property type="entry name" value="ACP-like"/>
    <property type="match status" value="2"/>
</dbReference>
<dbReference type="SUPFAM" id="SSF53474">
    <property type="entry name" value="alpha/beta-Hydrolases"/>
    <property type="match status" value="1"/>
</dbReference>
<dbReference type="SUPFAM" id="SSF52777">
    <property type="entry name" value="CoA-dependent acyltransferases"/>
    <property type="match status" value="2"/>
</dbReference>
<dbReference type="PROSITE" id="PS00455">
    <property type="entry name" value="AMP_BINDING"/>
    <property type="match status" value="1"/>
</dbReference>
<dbReference type="PROSITE" id="PS50075">
    <property type="entry name" value="CARRIER"/>
    <property type="match status" value="2"/>
</dbReference>
<dbReference type="PROSITE" id="PS00012">
    <property type="entry name" value="PHOSPHOPANTETHEINE"/>
    <property type="match status" value="1"/>
</dbReference>
<gene>
    <name type="primary">mbtB</name>
    <name type="ordered locus">BQ2027_MB2404C</name>
</gene>
<name>MBTB_MYCBO</name>